<sequence length="737" mass="77025">MKKESMSRIERRKAQQRKKTPVQWKKSTTLFSSALIVSSVGTPVALLPVTAEATEEQPTNAEVAQAPTTETGLVETPTTETTPGTTEQPTTDSSTTTESTTESSKETPTTPSTEQPTADSTTPVESGTTDSSVAEITPVAPSATESEAAPAVTPDDEVKVPEARVASAQTFSALSPTQSPSEFIAELARCAQPIAQANDLYASVMMAQAIVESGWGASTLSKAPNYNLFGIKGSYNGQSVYMDTWEYLNGKWLVKKEPFRKYPSYMESFQDNAHVLKTTSFQAGVYYYAGAWKSNTSSYRDATAWLTGRYATDPSYNAKLNNVITAYNLTQYDTPSSGGNTGGGTVNPGTGGSNNQSGTNTYYTVKSGDTLNKIAAQYGVSVANLRSWNGISGDLIFVGQKLIVKKGASGNTGGSGSGGSNNNQSGTNTYYTVKSGDTLNKIAAQYGVSVANLRSWNGISGDLIFVGQKLIVKKGASGNTGGSNNGGSNNNQSGTNTYYTIKSGDTLNKIAAQYGVSVANLRSWNGISGDLIFAGQKIIVKKGTSGNTGGSSNGGSNNNQSGTNTYYTIKSGDTLNKISAQFGVSVANLQAWNNISGSLIFAGQKIIVKKGANSGSTNTNKPTNNGGGATTSYTIKSGDTLNKISAQFGVSVANLRSWNGIKGDLIFAGQTIIVKKGASAGGNASSTNSASGKRHTVKSGDSLWGLSMQYGISIQKIKQLNGLSGDTIYIGQTLKVG</sequence>
<comment type="function">
    <text>Hydrolyzes the cell wall of E.faecalis and M.lysodeikticus. May play an important role in cell wall growth and cell separation.</text>
</comment>
<comment type="subcellular location">
    <subcellularLocation>
        <location evidence="4">Secreted</location>
    </subcellularLocation>
</comment>
<comment type="domain">
    <text>LysM domains are thought to be involved in peptidoglycan binding.</text>
</comment>
<comment type="similarity">
    <text evidence="4">Belongs to the glycosyl hydrolase 73 family.</text>
</comment>
<proteinExistence type="evidence at protein level"/>
<protein>
    <recommendedName>
        <fullName>Autolysin</fullName>
        <ecNumber>3.2.1.-</ecNumber>
    </recommendedName>
    <alternativeName>
        <fullName>Beta-glycosidase</fullName>
    </alternativeName>
    <alternativeName>
        <fullName>Peptidoglycan hydrolase</fullName>
    </alternativeName>
</protein>
<feature type="signal peptide" evidence="1">
    <location>
        <begin position="1"/>
        <end position="53"/>
    </location>
</feature>
<feature type="chain" id="PRO_0000012115" description="Autolysin">
    <location>
        <begin position="54"/>
        <end position="737"/>
    </location>
</feature>
<feature type="domain" description="LysM 1" evidence="2">
    <location>
        <begin position="361"/>
        <end position="404"/>
    </location>
</feature>
<feature type="domain" description="LysM 2" evidence="2">
    <location>
        <begin position="429"/>
        <end position="472"/>
    </location>
</feature>
<feature type="domain" description="LysM 3" evidence="2">
    <location>
        <begin position="497"/>
        <end position="540"/>
    </location>
</feature>
<feature type="domain" description="LysM 4" evidence="2">
    <location>
        <begin position="565"/>
        <end position="608"/>
    </location>
</feature>
<feature type="domain" description="LysM 5" evidence="2">
    <location>
        <begin position="631"/>
        <end position="674"/>
    </location>
</feature>
<feature type="domain" description="LysM 6" evidence="2">
    <location>
        <begin position="693"/>
        <end position="736"/>
    </location>
</feature>
<feature type="region of interest" description="Disordered" evidence="3">
    <location>
        <begin position="1"/>
        <end position="28"/>
    </location>
</feature>
<feature type="region of interest" description="Disordered" evidence="3">
    <location>
        <begin position="51"/>
        <end position="132"/>
    </location>
</feature>
<feature type="region of interest" description="Disordered" evidence="3">
    <location>
        <begin position="335"/>
        <end position="360"/>
    </location>
</feature>
<feature type="region of interest" description="Disordered" evidence="3">
    <location>
        <begin position="409"/>
        <end position="429"/>
    </location>
</feature>
<feature type="compositionally biased region" description="Basic and acidic residues" evidence="3">
    <location>
        <begin position="1"/>
        <end position="13"/>
    </location>
</feature>
<feature type="compositionally biased region" description="Low complexity" evidence="3">
    <location>
        <begin position="67"/>
        <end position="117"/>
    </location>
</feature>
<feature type="compositionally biased region" description="Polar residues" evidence="3">
    <location>
        <begin position="118"/>
        <end position="132"/>
    </location>
</feature>
<feature type="compositionally biased region" description="Gly residues" evidence="3">
    <location>
        <begin position="339"/>
        <end position="352"/>
    </location>
</feature>
<feature type="compositionally biased region" description="Gly residues" evidence="3">
    <location>
        <begin position="410"/>
        <end position="419"/>
    </location>
</feature>
<feature type="compositionally biased region" description="Low complexity" evidence="3">
    <location>
        <begin position="420"/>
        <end position="429"/>
    </location>
</feature>
<feature type="sequence conflict" description="In Ref. 1; AAA67325." evidence="4" ref="1">
    <original>T</original>
    <variation>I</variation>
    <location>
        <position position="85"/>
    </location>
</feature>
<feature type="sequence conflict" description="In Ref. 1; AAA67325." evidence="4" ref="1">
    <original>A</original>
    <variation>V</variation>
    <location>
        <position position="118"/>
    </location>
</feature>
<feature type="sequence conflict" description="In Ref. 1; AAA67325." evidence="4" ref="1">
    <original>A</original>
    <variation>T</variation>
    <location>
        <position position="143"/>
    </location>
</feature>
<feature type="sequence conflict" description="In Ref. 1; AAA67325." evidence="4" ref="1">
    <original>S</original>
    <variation>N</variation>
    <location>
        <position position="417"/>
    </location>
</feature>
<feature type="sequence conflict" description="In Ref. 1; AAA67325." evidence="4" ref="1">
    <original>S</original>
    <variation>T</variation>
    <location>
        <position position="449"/>
    </location>
</feature>
<feature type="sequence conflict" description="In Ref. 1; AAA67325." evidence="4" ref="1">
    <original>A</original>
    <variation>T</variation>
    <location>
        <position position="476"/>
    </location>
</feature>
<feature type="sequence conflict" description="In Ref. 1; AAA67325." evidence="4" ref="1">
    <original>N</original>
    <variation>S</variation>
    <location>
        <position position="484"/>
    </location>
</feature>
<feature type="sequence conflict" description="In Ref. 1." evidence="4" ref="1">
    <location>
        <begin position="567"/>
        <end position="632"/>
    </location>
</feature>
<feature type="helix" evidence="6">
    <location>
        <begin position="180"/>
        <end position="197"/>
    </location>
</feature>
<feature type="helix" evidence="6">
    <location>
        <begin position="202"/>
        <end position="213"/>
    </location>
</feature>
<feature type="turn" evidence="6">
    <location>
        <begin position="214"/>
        <end position="217"/>
    </location>
</feature>
<feature type="turn" evidence="6">
    <location>
        <begin position="219"/>
        <end position="221"/>
    </location>
</feature>
<feature type="turn" evidence="6">
    <location>
        <begin position="223"/>
        <end position="225"/>
    </location>
</feature>
<feature type="strand" evidence="6">
    <location>
        <begin position="238"/>
        <end position="248"/>
    </location>
</feature>
<feature type="strand" evidence="6">
    <location>
        <begin position="251"/>
        <end position="260"/>
    </location>
</feature>
<feature type="helix" evidence="6">
    <location>
        <begin position="265"/>
        <end position="278"/>
    </location>
</feature>
<feature type="helix" evidence="6">
    <location>
        <begin position="289"/>
        <end position="291"/>
    </location>
</feature>
<feature type="helix" evidence="6">
    <location>
        <begin position="293"/>
        <end position="295"/>
    </location>
</feature>
<feature type="helix" evidence="6">
    <location>
        <begin position="299"/>
        <end position="306"/>
    </location>
</feature>
<feature type="turn" evidence="6">
    <location>
        <begin position="307"/>
        <end position="309"/>
    </location>
</feature>
<feature type="helix" evidence="6">
    <location>
        <begin position="316"/>
        <end position="326"/>
    </location>
</feature>
<feature type="helix" evidence="6">
    <location>
        <begin position="329"/>
        <end position="332"/>
    </location>
</feature>
<feature type="strand" evidence="5">
    <location>
        <begin position="429"/>
        <end position="432"/>
    </location>
</feature>
<feature type="helix" evidence="5">
    <location>
        <begin position="439"/>
        <end position="446"/>
    </location>
</feature>
<feature type="helix" evidence="5">
    <location>
        <begin position="450"/>
        <end position="457"/>
    </location>
</feature>
<feature type="strand" evidence="5">
    <location>
        <begin position="469"/>
        <end position="472"/>
    </location>
</feature>
<dbReference type="EC" id="3.2.1.-"/>
<dbReference type="EMBL" id="M58002">
    <property type="protein sequence ID" value="AAA67325.1"/>
    <property type="molecule type" value="Genomic_DNA"/>
</dbReference>
<dbReference type="EMBL" id="AE016830">
    <property type="protein sequence ID" value="AAO80613.1"/>
    <property type="molecule type" value="Genomic_DNA"/>
</dbReference>
<dbReference type="PIR" id="A38109">
    <property type="entry name" value="A38109"/>
</dbReference>
<dbReference type="RefSeq" id="NP_814543.1">
    <property type="nucleotide sequence ID" value="NC_004668.1"/>
</dbReference>
<dbReference type="RefSeq" id="WP_010706701.1">
    <property type="nucleotide sequence ID" value="NZ_KE136527.1"/>
</dbReference>
<dbReference type="PDB" id="2MKX">
    <property type="method" value="NMR"/>
    <property type="chains" value="A=426-475"/>
</dbReference>
<dbReference type="PDB" id="7QFU">
    <property type="method" value="X-ray"/>
    <property type="resolution" value="1.45 A"/>
    <property type="chains" value="A=172-338"/>
</dbReference>
<dbReference type="PDBsum" id="2MKX"/>
<dbReference type="PDBsum" id="7QFU"/>
<dbReference type="BMRB" id="P37710"/>
<dbReference type="SMR" id="P37710"/>
<dbReference type="IntAct" id="P37710">
    <property type="interactions" value="2"/>
</dbReference>
<dbReference type="STRING" id="226185.EF_0799"/>
<dbReference type="CAZy" id="CBM50">
    <property type="family name" value="Carbohydrate-Binding Module Family 50"/>
</dbReference>
<dbReference type="CAZy" id="GH73">
    <property type="family name" value="Glycoside Hydrolase Family 73"/>
</dbReference>
<dbReference type="EnsemblBacteria" id="AAO80613">
    <property type="protein sequence ID" value="AAO80613"/>
    <property type="gene ID" value="EF_0799"/>
</dbReference>
<dbReference type="KEGG" id="efa:EF0799"/>
<dbReference type="PATRIC" id="fig|226185.45.peg.2736"/>
<dbReference type="eggNOG" id="COG1388">
    <property type="taxonomic scope" value="Bacteria"/>
</dbReference>
<dbReference type="eggNOG" id="COG1705">
    <property type="taxonomic scope" value="Bacteria"/>
</dbReference>
<dbReference type="HOGENOM" id="CLU_013771_6_0_9"/>
<dbReference type="EvolutionaryTrace" id="P37710"/>
<dbReference type="Proteomes" id="UP000001415">
    <property type="component" value="Chromosome"/>
</dbReference>
<dbReference type="GO" id="GO:0005576">
    <property type="term" value="C:extracellular region"/>
    <property type="evidence" value="ECO:0007669"/>
    <property type="project" value="UniProtKB-SubCell"/>
</dbReference>
<dbReference type="GO" id="GO:0004040">
    <property type="term" value="F:amidase activity"/>
    <property type="evidence" value="ECO:0007669"/>
    <property type="project" value="InterPro"/>
</dbReference>
<dbReference type="GO" id="GO:0016798">
    <property type="term" value="F:hydrolase activity, acting on glycosyl bonds"/>
    <property type="evidence" value="ECO:0007669"/>
    <property type="project" value="UniProtKB-KW"/>
</dbReference>
<dbReference type="GO" id="GO:0008932">
    <property type="term" value="F:lytic endotransglycosylase activity"/>
    <property type="evidence" value="ECO:0007669"/>
    <property type="project" value="TreeGrafter"/>
</dbReference>
<dbReference type="GO" id="GO:0071555">
    <property type="term" value="P:cell wall organization"/>
    <property type="evidence" value="ECO:0007669"/>
    <property type="project" value="UniProtKB-KW"/>
</dbReference>
<dbReference type="GO" id="GO:0042742">
    <property type="term" value="P:defense response to bacterium"/>
    <property type="evidence" value="ECO:0007669"/>
    <property type="project" value="UniProtKB-KW"/>
</dbReference>
<dbReference type="GO" id="GO:0000917">
    <property type="term" value="P:division septum assembly"/>
    <property type="evidence" value="ECO:0007669"/>
    <property type="project" value="UniProtKB-KW"/>
</dbReference>
<dbReference type="GO" id="GO:0031640">
    <property type="term" value="P:killing of cells of another organism"/>
    <property type="evidence" value="ECO:0007669"/>
    <property type="project" value="UniProtKB-KW"/>
</dbReference>
<dbReference type="CDD" id="cd00118">
    <property type="entry name" value="LysM"/>
    <property type="match status" value="6"/>
</dbReference>
<dbReference type="Gene3D" id="1.10.530.10">
    <property type="match status" value="1"/>
</dbReference>
<dbReference type="Gene3D" id="4.10.80.30">
    <property type="entry name" value="DNA polymerase, domain 6"/>
    <property type="match status" value="1"/>
</dbReference>
<dbReference type="Gene3D" id="3.10.350.10">
    <property type="entry name" value="LysM domain"/>
    <property type="match status" value="6"/>
</dbReference>
<dbReference type="InterPro" id="IPR018392">
    <property type="entry name" value="LysM_dom"/>
</dbReference>
<dbReference type="InterPro" id="IPR036779">
    <property type="entry name" value="LysM_dom_sf"/>
</dbReference>
<dbReference type="InterPro" id="IPR002901">
    <property type="entry name" value="MGlyc_endo_b_GlcNAc-like_dom"/>
</dbReference>
<dbReference type="PANTHER" id="PTHR33734">
    <property type="entry name" value="LYSM DOMAIN-CONTAINING GPI-ANCHORED PROTEIN 2"/>
    <property type="match status" value="1"/>
</dbReference>
<dbReference type="PANTHER" id="PTHR33734:SF22">
    <property type="entry name" value="MEMBRANE-BOUND LYTIC MUREIN TRANSGLYCOSYLASE D"/>
    <property type="match status" value="1"/>
</dbReference>
<dbReference type="Pfam" id="PF01832">
    <property type="entry name" value="Glucosaminidase"/>
    <property type="match status" value="1"/>
</dbReference>
<dbReference type="Pfam" id="PF01476">
    <property type="entry name" value="LysM"/>
    <property type="match status" value="6"/>
</dbReference>
<dbReference type="SMART" id="SM00257">
    <property type="entry name" value="LysM"/>
    <property type="match status" value="6"/>
</dbReference>
<dbReference type="SMART" id="SM00047">
    <property type="entry name" value="LYZ2"/>
    <property type="match status" value="1"/>
</dbReference>
<dbReference type="SUPFAM" id="SSF54106">
    <property type="entry name" value="LysM domain"/>
    <property type="match status" value="6"/>
</dbReference>
<dbReference type="PROSITE" id="PS51782">
    <property type="entry name" value="LYSM"/>
    <property type="match status" value="6"/>
</dbReference>
<accession>P37710</accession>
<evidence type="ECO:0000255" key="1"/>
<evidence type="ECO:0000255" key="2">
    <source>
        <dbReference type="PROSITE-ProRule" id="PRU01118"/>
    </source>
</evidence>
<evidence type="ECO:0000256" key="3">
    <source>
        <dbReference type="SAM" id="MobiDB-lite"/>
    </source>
</evidence>
<evidence type="ECO:0000305" key="4"/>
<evidence type="ECO:0007829" key="5">
    <source>
        <dbReference type="PDB" id="2MKX"/>
    </source>
</evidence>
<evidence type="ECO:0007829" key="6">
    <source>
        <dbReference type="PDB" id="7QFU"/>
    </source>
</evidence>
<gene>
    <name type="ordered locus">EF_0799</name>
</gene>
<name>ALYS_ENTFA</name>
<reference key="1">
    <citation type="journal article" date="1991" name="J. Bacteriol.">
        <title>Cloning, sequencing, and expression in Escherichia coli of a Streptococcus faecalis autolysin.</title>
        <authorList>
            <person name="Beliveau C."/>
            <person name="Potvin C."/>
            <person name="Trudel J."/>
            <person name="Asselin A."/>
            <person name="Bellemare G."/>
        </authorList>
    </citation>
    <scope>NUCLEOTIDE SEQUENCE [GENOMIC DNA]</scope>
</reference>
<reference key="2">
    <citation type="journal article" date="2003" name="Science">
        <title>Role of mobile DNA in the evolution of vancomycin-resistant Enterococcus faecalis.</title>
        <authorList>
            <person name="Paulsen I.T."/>
            <person name="Banerjei L."/>
            <person name="Myers G.S.A."/>
            <person name="Nelson K.E."/>
            <person name="Seshadri R."/>
            <person name="Read T.D."/>
            <person name="Fouts D.E."/>
            <person name="Eisen J.A."/>
            <person name="Gill S.R."/>
            <person name="Heidelberg J.F."/>
            <person name="Tettelin H."/>
            <person name="Dodson R.J."/>
            <person name="Umayam L.A."/>
            <person name="Brinkac L.M."/>
            <person name="Beanan M.J."/>
            <person name="Daugherty S.C."/>
            <person name="DeBoy R.T."/>
            <person name="Durkin S.A."/>
            <person name="Kolonay J.F."/>
            <person name="Madupu R."/>
            <person name="Nelson W.C."/>
            <person name="Vamathevan J.J."/>
            <person name="Tran B."/>
            <person name="Upton J."/>
            <person name="Hansen T."/>
            <person name="Shetty J."/>
            <person name="Khouri H.M."/>
            <person name="Utterback T.R."/>
            <person name="Radune D."/>
            <person name="Ketchum K.A."/>
            <person name="Dougherty B.A."/>
            <person name="Fraser C.M."/>
        </authorList>
    </citation>
    <scope>NUCLEOTIDE SEQUENCE [LARGE SCALE GENOMIC DNA]</scope>
    <source>
        <strain>ATCC 700802 / V583</strain>
    </source>
</reference>
<organism>
    <name type="scientific">Enterococcus faecalis (strain ATCC 700802 / V583)</name>
    <dbReference type="NCBI Taxonomy" id="226185"/>
    <lineage>
        <taxon>Bacteria</taxon>
        <taxon>Bacillati</taxon>
        <taxon>Bacillota</taxon>
        <taxon>Bacilli</taxon>
        <taxon>Lactobacillales</taxon>
        <taxon>Enterococcaceae</taxon>
        <taxon>Enterococcus</taxon>
    </lineage>
</organism>
<keyword id="KW-0002">3D-structure</keyword>
<keyword id="KW-0929">Antimicrobial</keyword>
<keyword id="KW-0081">Bacteriolytic enzyme</keyword>
<keyword id="KW-0131">Cell cycle</keyword>
<keyword id="KW-0132">Cell division</keyword>
<keyword id="KW-0961">Cell wall biogenesis/degradation</keyword>
<keyword id="KW-0326">Glycosidase</keyword>
<keyword id="KW-0378">Hydrolase</keyword>
<keyword id="KW-1185">Reference proteome</keyword>
<keyword id="KW-0677">Repeat</keyword>
<keyword id="KW-0964">Secreted</keyword>
<keyword id="KW-0717">Septation</keyword>
<keyword id="KW-0732">Signal</keyword>